<evidence type="ECO:0000255" key="1">
    <source>
        <dbReference type="HAMAP-Rule" id="MF_01322"/>
    </source>
</evidence>
<evidence type="ECO:0000256" key="2">
    <source>
        <dbReference type="SAM" id="MobiDB-lite"/>
    </source>
</evidence>
<organism>
    <name type="scientific">Magnetococcus marinus (strain ATCC BAA-1437 / JCM 17883 / MC-1)</name>
    <dbReference type="NCBI Taxonomy" id="156889"/>
    <lineage>
        <taxon>Bacteria</taxon>
        <taxon>Pseudomonadati</taxon>
        <taxon>Pseudomonadota</taxon>
        <taxon>Alphaproteobacteria</taxon>
        <taxon>Magnetococcales</taxon>
        <taxon>Magnetococcaceae</taxon>
        <taxon>Magnetococcus</taxon>
    </lineage>
</organism>
<proteinExistence type="inferred from homology"/>
<reference key="1">
    <citation type="journal article" date="2009" name="Appl. Environ. Microbiol.">
        <title>Complete genome sequence of the chemolithoautotrophic marine magnetotactic coccus strain MC-1.</title>
        <authorList>
            <person name="Schubbe S."/>
            <person name="Williams T.J."/>
            <person name="Xie G."/>
            <person name="Kiss H.E."/>
            <person name="Brettin T.S."/>
            <person name="Martinez D."/>
            <person name="Ross C.A."/>
            <person name="Schuler D."/>
            <person name="Cox B.L."/>
            <person name="Nealson K.H."/>
            <person name="Bazylinski D.A."/>
        </authorList>
    </citation>
    <scope>NUCLEOTIDE SEQUENCE [LARGE SCALE GENOMIC DNA]</scope>
    <source>
        <strain>ATCC BAA-1437 / JCM 17883 / MC-1</strain>
    </source>
</reference>
<keyword id="KW-0240">DNA-directed RNA polymerase</keyword>
<keyword id="KW-0460">Magnesium</keyword>
<keyword id="KW-0479">Metal-binding</keyword>
<keyword id="KW-0548">Nucleotidyltransferase</keyword>
<keyword id="KW-1185">Reference proteome</keyword>
<keyword id="KW-0804">Transcription</keyword>
<keyword id="KW-0808">Transferase</keyword>
<keyword id="KW-0862">Zinc</keyword>
<name>RPOC_MAGMM</name>
<gene>
    <name evidence="1" type="primary">rpoC</name>
    <name type="ordered locus">Mmc1_0841</name>
</gene>
<sequence length="1412" mass="157052">MTPVSDAPATPSSEISAAGQSVFKLFSRPMLGQSFDGIRISIASPEKIRSWSFGEVKKPETINYRTFKPERDGLFCAKIFGPVKDYECLCGKYKRLKHRGVVCEKCGVEVIQSKVRRERMGHIELAAPVAHIWFLKSLPSRIGLLLDMTLKDLERVLYFENFVVLESGMTPMKRGELLTEDRYYQLIEEFGDEFRAGIGAEAIREMLVDLKIPEEINQLRDELRDTSSEARRKKIVKRLHTLEAFQDSKNSPEWMILEVIPVIPPELRPLVPLDGGRFATSDLNDLYRRVINRNNRLKRLFELKAPDIIIRNEKRMLQESVDALFDNGRRGRVITGTNKRPLKSLSEMLKGKQGRFRLNLLGKRVDYSGRSVIVVGPELKLHECGLPKKMALELFKPFIYNRLEERGLATTIKAAKRMVEKEKGEVWDILEEVIREHPVMLNRAPTLHRLGIQAFEPKLVEGKAIQLHPLVCTAFNADFDGDQMAVHVPLSIEAQIEARVLMMSTNNILSPANGKPIIVPTQDIILGLYYMTSERANVAGEGMIFSNTMEVKQAFDAGVANLHASIQCRFRGKRVHTTVGRMLLADMLPERIDFQAINKLITKKEVTKLIDHTYRMCGTKDTVIFTDRLMAMGFAFACRAGISFGKDDMVIPEAKRKLVDAAQEKVKEIEKQYTDGLITEGEKYNKVVDIWSHCTERVADEMMGTISTDTVLNKDGEMVEQPSFNSIFMMANSGARGSAAQMRQLAGMRGLMAKPSGEIMETPITANFREGLTVLQYFISTHGARKGLADTALKTANSGYLTRRLVDVAQDCIVREEDCGTSIGITVAALVEGNDVVETLGDRLLGRTPVSDIKDPITDELLVKAGTIMDEDIVEKIENSNVDSVLIRSPLTCETTRGVCVTCYGRDLARGTRVTVGEAVGVIAAQSIGEPGTQLTMRTFHIGGTASRQAEQSHQETTHGGVLKFHDLITVQDRAGRYVVLSRNSEVSLHEAVEHEGQVEAGRERERYRIPYGARISSAPGSVVEKGTTFAEWDPFAMPIITEVEGIVKFGDLVDGVSLRENMDDTTGLISKEVTEWKGQSSKKGDMRPRITLKDVNSNETLMMPNGSECRYYLPVGAVIVVNEGDHVHGGDIIAKVLRQSTKNRDITGGLPRVVELFEARKPKEHSFIAENEGMVTYGKDLKGKRRLVVTPDSGEPMEYLLPKGKQLAVNEGDWVRKGEPLMEGSPVPQDILKVLGLEELCRFMVNEIQEVYRLQGVRINDKHIEVIVRQMLQKVQITDPGDTMFVSGEQVEKDDYLLENVKTDKRGGRVATCTPLLLGITKASLSTPSFISAASFQETTRVLTEAAISGRVDTLNGLKENVIVGRLIPAGTGNILSQLKKMGSLTKGEKSTQGGEQHVAKVASSSEVTEG</sequence>
<accession>A0L5W7</accession>
<feature type="chain" id="PRO_0000308850" description="DNA-directed RNA polymerase subunit beta'">
    <location>
        <begin position="1"/>
        <end position="1412"/>
    </location>
</feature>
<feature type="region of interest" description="Disordered" evidence="2">
    <location>
        <begin position="1387"/>
        <end position="1412"/>
    </location>
</feature>
<feature type="binding site" evidence="1">
    <location>
        <position position="88"/>
    </location>
    <ligand>
        <name>Zn(2+)</name>
        <dbReference type="ChEBI" id="CHEBI:29105"/>
        <label>1</label>
    </ligand>
</feature>
<feature type="binding site" evidence="1">
    <location>
        <position position="90"/>
    </location>
    <ligand>
        <name>Zn(2+)</name>
        <dbReference type="ChEBI" id="CHEBI:29105"/>
        <label>1</label>
    </ligand>
</feature>
<feature type="binding site" evidence="1">
    <location>
        <position position="103"/>
    </location>
    <ligand>
        <name>Zn(2+)</name>
        <dbReference type="ChEBI" id="CHEBI:29105"/>
        <label>1</label>
    </ligand>
</feature>
<feature type="binding site" evidence="1">
    <location>
        <position position="106"/>
    </location>
    <ligand>
        <name>Zn(2+)</name>
        <dbReference type="ChEBI" id="CHEBI:29105"/>
        <label>1</label>
    </ligand>
</feature>
<feature type="binding site" evidence="1">
    <location>
        <position position="478"/>
    </location>
    <ligand>
        <name>Mg(2+)</name>
        <dbReference type="ChEBI" id="CHEBI:18420"/>
    </ligand>
</feature>
<feature type="binding site" evidence="1">
    <location>
        <position position="480"/>
    </location>
    <ligand>
        <name>Mg(2+)</name>
        <dbReference type="ChEBI" id="CHEBI:18420"/>
    </ligand>
</feature>
<feature type="binding site" evidence="1">
    <location>
        <position position="482"/>
    </location>
    <ligand>
        <name>Mg(2+)</name>
        <dbReference type="ChEBI" id="CHEBI:18420"/>
    </ligand>
</feature>
<feature type="binding site" evidence="1">
    <location>
        <position position="819"/>
    </location>
    <ligand>
        <name>Zn(2+)</name>
        <dbReference type="ChEBI" id="CHEBI:29105"/>
        <label>2</label>
    </ligand>
</feature>
<feature type="binding site" evidence="1">
    <location>
        <position position="893"/>
    </location>
    <ligand>
        <name>Zn(2+)</name>
        <dbReference type="ChEBI" id="CHEBI:29105"/>
        <label>2</label>
    </ligand>
</feature>
<feature type="binding site" evidence="1">
    <location>
        <position position="900"/>
    </location>
    <ligand>
        <name>Zn(2+)</name>
        <dbReference type="ChEBI" id="CHEBI:29105"/>
        <label>2</label>
    </ligand>
</feature>
<feature type="binding site" evidence="1">
    <location>
        <position position="903"/>
    </location>
    <ligand>
        <name>Zn(2+)</name>
        <dbReference type="ChEBI" id="CHEBI:29105"/>
        <label>2</label>
    </ligand>
</feature>
<dbReference type="EC" id="2.7.7.6" evidence="1"/>
<dbReference type="EMBL" id="CP000471">
    <property type="protein sequence ID" value="ABK43360.1"/>
    <property type="molecule type" value="Genomic_DNA"/>
</dbReference>
<dbReference type="RefSeq" id="WP_011712520.1">
    <property type="nucleotide sequence ID" value="NC_008576.1"/>
</dbReference>
<dbReference type="SMR" id="A0L5W7"/>
<dbReference type="STRING" id="156889.Mmc1_0841"/>
<dbReference type="KEGG" id="mgm:Mmc1_0841"/>
<dbReference type="eggNOG" id="COG0086">
    <property type="taxonomic scope" value="Bacteria"/>
</dbReference>
<dbReference type="HOGENOM" id="CLU_000524_3_1_5"/>
<dbReference type="OrthoDB" id="9815296at2"/>
<dbReference type="Proteomes" id="UP000002586">
    <property type="component" value="Chromosome"/>
</dbReference>
<dbReference type="GO" id="GO:0000428">
    <property type="term" value="C:DNA-directed RNA polymerase complex"/>
    <property type="evidence" value="ECO:0007669"/>
    <property type="project" value="UniProtKB-KW"/>
</dbReference>
<dbReference type="GO" id="GO:0003677">
    <property type="term" value="F:DNA binding"/>
    <property type="evidence" value="ECO:0007669"/>
    <property type="project" value="UniProtKB-UniRule"/>
</dbReference>
<dbReference type="GO" id="GO:0003899">
    <property type="term" value="F:DNA-directed RNA polymerase activity"/>
    <property type="evidence" value="ECO:0007669"/>
    <property type="project" value="UniProtKB-UniRule"/>
</dbReference>
<dbReference type="GO" id="GO:0000287">
    <property type="term" value="F:magnesium ion binding"/>
    <property type="evidence" value="ECO:0007669"/>
    <property type="project" value="UniProtKB-UniRule"/>
</dbReference>
<dbReference type="GO" id="GO:0008270">
    <property type="term" value="F:zinc ion binding"/>
    <property type="evidence" value="ECO:0007669"/>
    <property type="project" value="UniProtKB-UniRule"/>
</dbReference>
<dbReference type="GO" id="GO:0006351">
    <property type="term" value="P:DNA-templated transcription"/>
    <property type="evidence" value="ECO:0007669"/>
    <property type="project" value="UniProtKB-UniRule"/>
</dbReference>
<dbReference type="CDD" id="cd02655">
    <property type="entry name" value="RNAP_beta'_C"/>
    <property type="match status" value="1"/>
</dbReference>
<dbReference type="CDD" id="cd01609">
    <property type="entry name" value="RNAP_beta'_N"/>
    <property type="match status" value="1"/>
</dbReference>
<dbReference type="FunFam" id="1.10.132.30:FF:000003">
    <property type="entry name" value="DNA-directed RNA polymerase subunit beta"/>
    <property type="match status" value="1"/>
</dbReference>
<dbReference type="FunFam" id="1.10.40.90:FF:000001">
    <property type="entry name" value="DNA-directed RNA polymerase subunit beta"/>
    <property type="match status" value="1"/>
</dbReference>
<dbReference type="FunFam" id="4.10.860.120:FF:000001">
    <property type="entry name" value="DNA-directed RNA polymerase subunit beta"/>
    <property type="match status" value="1"/>
</dbReference>
<dbReference type="Gene3D" id="1.10.132.30">
    <property type="match status" value="1"/>
</dbReference>
<dbReference type="Gene3D" id="1.10.150.390">
    <property type="match status" value="1"/>
</dbReference>
<dbReference type="Gene3D" id="1.10.1790.20">
    <property type="match status" value="1"/>
</dbReference>
<dbReference type="Gene3D" id="1.10.40.90">
    <property type="match status" value="1"/>
</dbReference>
<dbReference type="Gene3D" id="2.40.40.20">
    <property type="match status" value="1"/>
</dbReference>
<dbReference type="Gene3D" id="2.40.50.100">
    <property type="match status" value="3"/>
</dbReference>
<dbReference type="Gene3D" id="4.10.860.120">
    <property type="entry name" value="RNA polymerase II, clamp domain"/>
    <property type="match status" value="1"/>
</dbReference>
<dbReference type="Gene3D" id="1.10.274.100">
    <property type="entry name" value="RNA polymerase Rpb1, domain 3"/>
    <property type="match status" value="2"/>
</dbReference>
<dbReference type="HAMAP" id="MF_01322">
    <property type="entry name" value="RNApol_bact_RpoC"/>
    <property type="match status" value="1"/>
</dbReference>
<dbReference type="InterPro" id="IPR045867">
    <property type="entry name" value="DNA-dir_RpoC_beta_prime"/>
</dbReference>
<dbReference type="InterPro" id="IPR012754">
    <property type="entry name" value="DNA-dir_RpoC_beta_prime_bact"/>
</dbReference>
<dbReference type="InterPro" id="IPR000722">
    <property type="entry name" value="RNA_pol_asu"/>
</dbReference>
<dbReference type="InterPro" id="IPR006592">
    <property type="entry name" value="RNA_pol_N"/>
</dbReference>
<dbReference type="InterPro" id="IPR007080">
    <property type="entry name" value="RNA_pol_Rpb1_1"/>
</dbReference>
<dbReference type="InterPro" id="IPR007066">
    <property type="entry name" value="RNA_pol_Rpb1_3"/>
</dbReference>
<dbReference type="InterPro" id="IPR042102">
    <property type="entry name" value="RNA_pol_Rpb1_3_sf"/>
</dbReference>
<dbReference type="InterPro" id="IPR007083">
    <property type="entry name" value="RNA_pol_Rpb1_4"/>
</dbReference>
<dbReference type="InterPro" id="IPR007081">
    <property type="entry name" value="RNA_pol_Rpb1_5"/>
</dbReference>
<dbReference type="InterPro" id="IPR044893">
    <property type="entry name" value="RNA_pol_Rpb1_clamp_domain"/>
</dbReference>
<dbReference type="InterPro" id="IPR038120">
    <property type="entry name" value="Rpb1_funnel_sf"/>
</dbReference>
<dbReference type="NCBIfam" id="TIGR02386">
    <property type="entry name" value="rpoC_TIGR"/>
    <property type="match status" value="1"/>
</dbReference>
<dbReference type="PANTHER" id="PTHR19376">
    <property type="entry name" value="DNA-DIRECTED RNA POLYMERASE"/>
    <property type="match status" value="1"/>
</dbReference>
<dbReference type="PANTHER" id="PTHR19376:SF54">
    <property type="entry name" value="DNA-DIRECTED RNA POLYMERASE SUBUNIT BETA"/>
    <property type="match status" value="1"/>
</dbReference>
<dbReference type="Pfam" id="PF04997">
    <property type="entry name" value="RNA_pol_Rpb1_1"/>
    <property type="match status" value="1"/>
</dbReference>
<dbReference type="Pfam" id="PF00623">
    <property type="entry name" value="RNA_pol_Rpb1_2"/>
    <property type="match status" value="1"/>
</dbReference>
<dbReference type="Pfam" id="PF04983">
    <property type="entry name" value="RNA_pol_Rpb1_3"/>
    <property type="match status" value="1"/>
</dbReference>
<dbReference type="Pfam" id="PF05000">
    <property type="entry name" value="RNA_pol_Rpb1_4"/>
    <property type="match status" value="1"/>
</dbReference>
<dbReference type="Pfam" id="PF04998">
    <property type="entry name" value="RNA_pol_Rpb1_5"/>
    <property type="match status" value="1"/>
</dbReference>
<dbReference type="SMART" id="SM00663">
    <property type="entry name" value="RPOLA_N"/>
    <property type="match status" value="1"/>
</dbReference>
<dbReference type="SUPFAM" id="SSF64484">
    <property type="entry name" value="beta and beta-prime subunits of DNA dependent RNA-polymerase"/>
    <property type="match status" value="1"/>
</dbReference>
<protein>
    <recommendedName>
        <fullName evidence="1">DNA-directed RNA polymerase subunit beta'</fullName>
        <shortName evidence="1">RNAP subunit beta'</shortName>
        <ecNumber evidence="1">2.7.7.6</ecNumber>
    </recommendedName>
    <alternativeName>
        <fullName evidence="1">RNA polymerase subunit beta'</fullName>
    </alternativeName>
    <alternativeName>
        <fullName evidence="1">Transcriptase subunit beta'</fullName>
    </alternativeName>
</protein>
<comment type="function">
    <text evidence="1">DNA-dependent RNA polymerase catalyzes the transcription of DNA into RNA using the four ribonucleoside triphosphates as substrates.</text>
</comment>
<comment type="catalytic activity">
    <reaction evidence="1">
        <text>RNA(n) + a ribonucleoside 5'-triphosphate = RNA(n+1) + diphosphate</text>
        <dbReference type="Rhea" id="RHEA:21248"/>
        <dbReference type="Rhea" id="RHEA-COMP:14527"/>
        <dbReference type="Rhea" id="RHEA-COMP:17342"/>
        <dbReference type="ChEBI" id="CHEBI:33019"/>
        <dbReference type="ChEBI" id="CHEBI:61557"/>
        <dbReference type="ChEBI" id="CHEBI:140395"/>
        <dbReference type="EC" id="2.7.7.6"/>
    </reaction>
</comment>
<comment type="cofactor">
    <cofactor evidence="1">
        <name>Mg(2+)</name>
        <dbReference type="ChEBI" id="CHEBI:18420"/>
    </cofactor>
    <text evidence="1">Binds 1 Mg(2+) ion per subunit.</text>
</comment>
<comment type="cofactor">
    <cofactor evidence="1">
        <name>Zn(2+)</name>
        <dbReference type="ChEBI" id="CHEBI:29105"/>
    </cofactor>
    <text evidence="1">Binds 2 Zn(2+) ions per subunit.</text>
</comment>
<comment type="subunit">
    <text evidence="1">The RNAP catalytic core consists of 2 alpha, 1 beta, 1 beta' and 1 omega subunit. When a sigma factor is associated with the core the holoenzyme is formed, which can initiate transcription.</text>
</comment>
<comment type="similarity">
    <text evidence="1">Belongs to the RNA polymerase beta' chain family.</text>
</comment>